<evidence type="ECO:0000250" key="1"/>
<evidence type="ECO:0000305" key="2"/>
<sequence>MIDSAAPPSGFCRDCLKEQAAHSRRCLACGSPRLLRHSELYRLTLAHIDCDAFYASVEKRDNPELADKPVIIGGGKRGVVSTACYIARIHGVRSAMPMFKALEACPQAVVIKPDMEKYVRVGREVRAMMQELTPLVQPLSIDEAFLDLSGTERLHHDPPARTLARFAKRVEQEIGITVSVGLSYCKFLAKVASDLQKPRGFSVIGQAEAADFLKAKPVTLIWGVGKAFAATLERDGIRAIGQLQTMEEADLMRRYGTMGRRLYRLSRGLDERSVEIDGEAKSVSSETTFNDDLARQEDLVAHLRGLSEQVAFRLRKSALAGQTVVLKLKTADFKTRTRNRRLESPTRLADRIFRTGLQLLEKEVDGTKYRLIGIGVSDLVDPDLADPPDLVDPQASRRAAAEDAINRLRDKFGKTSVETGYTFGKGRRGQ</sequence>
<name>DPO41_RHIME</name>
<accession>Q92QM8</accession>
<keyword id="KW-0963">Cytoplasm</keyword>
<keyword id="KW-0227">DNA damage</keyword>
<keyword id="KW-0234">DNA repair</keyword>
<keyword id="KW-0235">DNA replication</keyword>
<keyword id="KW-0238">DNA-binding</keyword>
<keyword id="KW-0239">DNA-directed DNA polymerase</keyword>
<keyword id="KW-0460">Magnesium</keyword>
<keyword id="KW-0479">Metal-binding</keyword>
<keyword id="KW-0515">Mutator protein</keyword>
<keyword id="KW-0548">Nucleotidyltransferase</keyword>
<keyword id="KW-1185">Reference proteome</keyword>
<keyword id="KW-0808">Transferase</keyword>
<proteinExistence type="inferred from homology"/>
<comment type="function">
    <text evidence="1">Poorly processive, error-prone DNA polymerase involved in untargeted mutagenesis. Copies undamaged DNA at stalled replication forks, which arise in vivo from mismatched or misaligned primer ends. These misaligned primers can be extended by PolIV. Exhibits no 3'-5' exonuclease (proofreading) activity. May be involved in translesional synthesis, in conjunction with the beta clamp from PolIII (By similarity).</text>
</comment>
<comment type="catalytic activity">
    <reaction>
        <text>DNA(n) + a 2'-deoxyribonucleoside 5'-triphosphate = DNA(n+1) + diphosphate</text>
        <dbReference type="Rhea" id="RHEA:22508"/>
        <dbReference type="Rhea" id="RHEA-COMP:17339"/>
        <dbReference type="Rhea" id="RHEA-COMP:17340"/>
        <dbReference type="ChEBI" id="CHEBI:33019"/>
        <dbReference type="ChEBI" id="CHEBI:61560"/>
        <dbReference type="ChEBI" id="CHEBI:173112"/>
        <dbReference type="EC" id="2.7.7.7"/>
    </reaction>
</comment>
<comment type="cofactor">
    <cofactor evidence="1">
        <name>Mg(2+)</name>
        <dbReference type="ChEBI" id="CHEBI:18420"/>
    </cofactor>
    <text evidence="1">Binds 2 magnesium ions per subunit.</text>
</comment>
<comment type="subunit">
    <text evidence="1">Monomer.</text>
</comment>
<comment type="subcellular location">
    <subcellularLocation>
        <location evidence="1">Cytoplasm</location>
    </subcellularLocation>
</comment>
<comment type="similarity">
    <text evidence="2">Belongs to the DNA polymerase type-Y family.</text>
</comment>
<organism>
    <name type="scientific">Rhizobium meliloti (strain 1021)</name>
    <name type="common">Ensifer meliloti</name>
    <name type="synonym">Sinorhizobium meliloti</name>
    <dbReference type="NCBI Taxonomy" id="266834"/>
    <lineage>
        <taxon>Bacteria</taxon>
        <taxon>Pseudomonadati</taxon>
        <taxon>Pseudomonadota</taxon>
        <taxon>Alphaproteobacteria</taxon>
        <taxon>Hyphomicrobiales</taxon>
        <taxon>Rhizobiaceae</taxon>
        <taxon>Sinorhizobium/Ensifer group</taxon>
        <taxon>Sinorhizobium</taxon>
    </lineage>
</organism>
<protein>
    <recommendedName>
        <fullName>DNA polymerase IV 1</fullName>
        <shortName>Pol IV 1</shortName>
        <ecNumber>2.7.7.7</ecNumber>
    </recommendedName>
</protein>
<feature type="chain" id="PRO_0000173939" description="DNA polymerase IV 1">
    <location>
        <begin position="1"/>
        <end position="430"/>
    </location>
</feature>
<feature type="domain" description="UmuC">
    <location>
        <begin position="45"/>
        <end position="225"/>
    </location>
</feature>
<feature type="active site" evidence="1">
    <location>
        <position position="143"/>
    </location>
</feature>
<feature type="binding site" evidence="1">
    <location>
        <position position="49"/>
    </location>
    <ligand>
        <name>Mg(2+)</name>
        <dbReference type="ChEBI" id="CHEBI:18420"/>
    </ligand>
</feature>
<feature type="binding site" evidence="1">
    <location>
        <position position="142"/>
    </location>
    <ligand>
        <name>Mg(2+)</name>
        <dbReference type="ChEBI" id="CHEBI:18420"/>
    </ligand>
</feature>
<feature type="site" description="Substrate discrimination" evidence="1">
    <location>
        <position position="54"/>
    </location>
</feature>
<dbReference type="EC" id="2.7.7.7"/>
<dbReference type="EMBL" id="AL591688">
    <property type="protein sequence ID" value="CAC45870.1"/>
    <property type="molecule type" value="Genomic_DNA"/>
</dbReference>
<dbReference type="RefSeq" id="NP_385397.1">
    <property type="nucleotide sequence ID" value="NC_003047.1"/>
</dbReference>
<dbReference type="RefSeq" id="WP_010969160.1">
    <property type="nucleotide sequence ID" value="NC_003047.1"/>
</dbReference>
<dbReference type="SMR" id="Q92QM8"/>
<dbReference type="EnsemblBacteria" id="CAC45870">
    <property type="protein sequence ID" value="CAC45870"/>
    <property type="gene ID" value="SMc01373"/>
</dbReference>
<dbReference type="KEGG" id="sme:SMc01373"/>
<dbReference type="PATRIC" id="fig|266834.11.peg.2705"/>
<dbReference type="eggNOG" id="COG0389">
    <property type="taxonomic scope" value="Bacteria"/>
</dbReference>
<dbReference type="HOGENOM" id="CLU_012348_1_0_5"/>
<dbReference type="OrthoDB" id="9808813at2"/>
<dbReference type="Proteomes" id="UP000001976">
    <property type="component" value="Chromosome"/>
</dbReference>
<dbReference type="GO" id="GO:0005829">
    <property type="term" value="C:cytosol"/>
    <property type="evidence" value="ECO:0007669"/>
    <property type="project" value="TreeGrafter"/>
</dbReference>
<dbReference type="GO" id="GO:0003684">
    <property type="term" value="F:damaged DNA binding"/>
    <property type="evidence" value="ECO:0007669"/>
    <property type="project" value="InterPro"/>
</dbReference>
<dbReference type="GO" id="GO:0003887">
    <property type="term" value="F:DNA-directed DNA polymerase activity"/>
    <property type="evidence" value="ECO:0007669"/>
    <property type="project" value="UniProtKB-UniRule"/>
</dbReference>
<dbReference type="GO" id="GO:0000287">
    <property type="term" value="F:magnesium ion binding"/>
    <property type="evidence" value="ECO:0007669"/>
    <property type="project" value="UniProtKB-UniRule"/>
</dbReference>
<dbReference type="GO" id="GO:0006261">
    <property type="term" value="P:DNA-templated DNA replication"/>
    <property type="evidence" value="ECO:0007669"/>
    <property type="project" value="UniProtKB-UniRule"/>
</dbReference>
<dbReference type="GO" id="GO:0042276">
    <property type="term" value="P:error-prone translesion synthesis"/>
    <property type="evidence" value="ECO:0007669"/>
    <property type="project" value="TreeGrafter"/>
</dbReference>
<dbReference type="GO" id="GO:0009432">
    <property type="term" value="P:SOS response"/>
    <property type="evidence" value="ECO:0000269"/>
    <property type="project" value="CollecTF"/>
</dbReference>
<dbReference type="CDD" id="cd03586">
    <property type="entry name" value="PolY_Pol_IV_kappa"/>
    <property type="match status" value="1"/>
</dbReference>
<dbReference type="FunFam" id="1.10.150.20:FF:000094">
    <property type="entry name" value="DNA polymerase IV"/>
    <property type="match status" value="1"/>
</dbReference>
<dbReference type="FunFam" id="3.30.1490.100:FF:000016">
    <property type="entry name" value="DNA polymerase IV"/>
    <property type="match status" value="1"/>
</dbReference>
<dbReference type="FunFam" id="3.40.1170.60:FF:000001">
    <property type="entry name" value="DNA polymerase IV"/>
    <property type="match status" value="1"/>
</dbReference>
<dbReference type="Gene3D" id="3.30.70.270">
    <property type="match status" value="1"/>
</dbReference>
<dbReference type="Gene3D" id="3.40.1170.60">
    <property type="match status" value="1"/>
</dbReference>
<dbReference type="Gene3D" id="1.10.150.20">
    <property type="entry name" value="5' to 3' exonuclease, C-terminal subdomain"/>
    <property type="match status" value="1"/>
</dbReference>
<dbReference type="Gene3D" id="3.30.1490.100">
    <property type="entry name" value="DNA polymerase, Y-family, little finger domain"/>
    <property type="match status" value="1"/>
</dbReference>
<dbReference type="HAMAP" id="MF_01113">
    <property type="entry name" value="DNApol_IV"/>
    <property type="match status" value="1"/>
</dbReference>
<dbReference type="InterPro" id="IPR043502">
    <property type="entry name" value="DNA/RNA_pol_sf"/>
</dbReference>
<dbReference type="InterPro" id="IPR036775">
    <property type="entry name" value="DNA_pol_Y-fam_lit_finger_sf"/>
</dbReference>
<dbReference type="InterPro" id="IPR017961">
    <property type="entry name" value="DNA_pol_Y-fam_little_finger"/>
</dbReference>
<dbReference type="InterPro" id="IPR050116">
    <property type="entry name" value="DNA_polymerase-Y"/>
</dbReference>
<dbReference type="InterPro" id="IPR022880">
    <property type="entry name" value="DNApol_IV"/>
</dbReference>
<dbReference type="InterPro" id="IPR043128">
    <property type="entry name" value="Rev_trsase/Diguanyl_cyclase"/>
</dbReference>
<dbReference type="InterPro" id="IPR001126">
    <property type="entry name" value="UmuC"/>
</dbReference>
<dbReference type="NCBIfam" id="NF002677">
    <property type="entry name" value="PRK02406.1"/>
    <property type="match status" value="1"/>
</dbReference>
<dbReference type="NCBIfam" id="NF002751">
    <property type="entry name" value="PRK02794.1"/>
    <property type="match status" value="1"/>
</dbReference>
<dbReference type="PANTHER" id="PTHR11076:SF33">
    <property type="entry name" value="DNA POLYMERASE KAPPA"/>
    <property type="match status" value="1"/>
</dbReference>
<dbReference type="PANTHER" id="PTHR11076">
    <property type="entry name" value="DNA REPAIR POLYMERASE UMUC / TRANSFERASE FAMILY MEMBER"/>
    <property type="match status" value="1"/>
</dbReference>
<dbReference type="Pfam" id="PF00817">
    <property type="entry name" value="IMS"/>
    <property type="match status" value="1"/>
</dbReference>
<dbReference type="Pfam" id="PF11799">
    <property type="entry name" value="IMS_C"/>
    <property type="match status" value="1"/>
</dbReference>
<dbReference type="SUPFAM" id="SSF56672">
    <property type="entry name" value="DNA/RNA polymerases"/>
    <property type="match status" value="1"/>
</dbReference>
<dbReference type="SUPFAM" id="SSF100879">
    <property type="entry name" value="Lesion bypass DNA polymerase (Y-family), little finger domain"/>
    <property type="match status" value="1"/>
</dbReference>
<dbReference type="PROSITE" id="PS50173">
    <property type="entry name" value="UMUC"/>
    <property type="match status" value="1"/>
</dbReference>
<reference key="1">
    <citation type="journal article" date="2001" name="Proc. Natl. Acad. Sci. U.S.A.">
        <title>Analysis of the chromosome sequence of the legume symbiont Sinorhizobium meliloti strain 1021.</title>
        <authorList>
            <person name="Capela D."/>
            <person name="Barloy-Hubler F."/>
            <person name="Gouzy J."/>
            <person name="Bothe G."/>
            <person name="Ampe F."/>
            <person name="Batut J."/>
            <person name="Boistard P."/>
            <person name="Becker A."/>
            <person name="Boutry M."/>
            <person name="Cadieu E."/>
            <person name="Dreano S."/>
            <person name="Gloux S."/>
            <person name="Godrie T."/>
            <person name="Goffeau A."/>
            <person name="Kahn D."/>
            <person name="Kiss E."/>
            <person name="Lelaure V."/>
            <person name="Masuy D."/>
            <person name="Pohl T."/>
            <person name="Portetelle D."/>
            <person name="Puehler A."/>
            <person name="Purnelle B."/>
            <person name="Ramsperger U."/>
            <person name="Renard C."/>
            <person name="Thebault P."/>
            <person name="Vandenbol M."/>
            <person name="Weidner S."/>
            <person name="Galibert F."/>
        </authorList>
    </citation>
    <scope>NUCLEOTIDE SEQUENCE [LARGE SCALE GENOMIC DNA]</scope>
    <source>
        <strain>1021</strain>
    </source>
</reference>
<reference key="2">
    <citation type="journal article" date="2001" name="Science">
        <title>The composite genome of the legume symbiont Sinorhizobium meliloti.</title>
        <authorList>
            <person name="Galibert F."/>
            <person name="Finan T.M."/>
            <person name="Long S.R."/>
            <person name="Puehler A."/>
            <person name="Abola P."/>
            <person name="Ampe F."/>
            <person name="Barloy-Hubler F."/>
            <person name="Barnett M.J."/>
            <person name="Becker A."/>
            <person name="Boistard P."/>
            <person name="Bothe G."/>
            <person name="Boutry M."/>
            <person name="Bowser L."/>
            <person name="Buhrmester J."/>
            <person name="Cadieu E."/>
            <person name="Capela D."/>
            <person name="Chain P."/>
            <person name="Cowie A."/>
            <person name="Davis R.W."/>
            <person name="Dreano S."/>
            <person name="Federspiel N.A."/>
            <person name="Fisher R.F."/>
            <person name="Gloux S."/>
            <person name="Godrie T."/>
            <person name="Goffeau A."/>
            <person name="Golding B."/>
            <person name="Gouzy J."/>
            <person name="Gurjal M."/>
            <person name="Hernandez-Lucas I."/>
            <person name="Hong A."/>
            <person name="Huizar L."/>
            <person name="Hyman R.W."/>
            <person name="Jones T."/>
            <person name="Kahn D."/>
            <person name="Kahn M.L."/>
            <person name="Kalman S."/>
            <person name="Keating D.H."/>
            <person name="Kiss E."/>
            <person name="Komp C."/>
            <person name="Lelaure V."/>
            <person name="Masuy D."/>
            <person name="Palm C."/>
            <person name="Peck M.C."/>
            <person name="Pohl T.M."/>
            <person name="Portetelle D."/>
            <person name="Purnelle B."/>
            <person name="Ramsperger U."/>
            <person name="Surzycki R."/>
            <person name="Thebault P."/>
            <person name="Vandenbol M."/>
            <person name="Vorhoelter F.J."/>
            <person name="Weidner S."/>
            <person name="Wells D.H."/>
            <person name="Wong K."/>
            <person name="Yeh K.-C."/>
            <person name="Batut J."/>
        </authorList>
    </citation>
    <scope>NUCLEOTIDE SEQUENCE [LARGE SCALE GENOMIC DNA]</scope>
    <source>
        <strain>1021</strain>
    </source>
</reference>
<gene>
    <name type="primary">dinB1</name>
    <name type="ordered locus">R01291</name>
    <name type="ORF">SMc01373</name>
</gene>